<accession>A7ZUE0</accession>
<comment type="function">
    <text evidence="1">Key enzyme in the regulation of glycerol uptake and metabolism. Catalyzes the phosphorylation of glycerol to yield sn-glycerol 3-phosphate.</text>
</comment>
<comment type="catalytic activity">
    <reaction evidence="1">
        <text>glycerol + ATP = sn-glycerol 3-phosphate + ADP + H(+)</text>
        <dbReference type="Rhea" id="RHEA:21644"/>
        <dbReference type="ChEBI" id="CHEBI:15378"/>
        <dbReference type="ChEBI" id="CHEBI:17754"/>
        <dbReference type="ChEBI" id="CHEBI:30616"/>
        <dbReference type="ChEBI" id="CHEBI:57597"/>
        <dbReference type="ChEBI" id="CHEBI:456216"/>
        <dbReference type="EC" id="2.7.1.30"/>
    </reaction>
</comment>
<comment type="activity regulation">
    <text evidence="1">Activity of this regulatory enzyme is affected by several metabolites. Allosterically and non-competitively inhibited by fructose 1,6-bisphosphate (FBP) and unphosphorylated phosphocarrier protein EIIA-Glc (III-Glc), an integral component of the bacterial phosphotransferase (PTS) system.</text>
</comment>
<comment type="pathway">
    <text evidence="1">Polyol metabolism; glycerol degradation via glycerol kinase pathway; sn-glycerol 3-phosphate from glycerol: step 1/1.</text>
</comment>
<comment type="subunit">
    <text evidence="1">Homotetramer and homodimer (in equilibrium). Heterodimer with EIIA-Glc. Binds 1 zinc ion per glycerol kinase EIIA-Glc dimer. The zinc ion is important for dimerization.</text>
</comment>
<comment type="similarity">
    <text evidence="1">Belongs to the FGGY kinase family.</text>
</comment>
<gene>
    <name evidence="1" type="primary">glpK</name>
    <name type="ordered locus">EcE24377A_4460</name>
</gene>
<sequence length="502" mass="56231">MTEKKYIVALDQGTTSSRAVVMDHDANIISVSQREFEQIYPKPGWVEHDPMEIWATQSSTLVEVLAKADISSDQIAAIGITNQRETTIVWEKETGKPIYNAIVWQCRRTAEICEHLKRDGLEDYIRSNTGLVIDPYFSGTKVKWILDHVEGSRERARRGELLFGTVDTWLIWKMTQGRVHVTDYTNASRTMLFNIHTLDWDDKMLEVLDIPREMLPEVRRSSEVYGQTNIGGKGGTRIPISGIAGDQQAALFGQLCVKEGMAKNTYGTGCFMLMNTGEKAVKSENGLLTTIACGPTGEVNYALEGAVFMAGASIQWLRDEMKLINDAYDSEYFATKVQNTNGVYVVPAFTGLGAPYWDPYARGAIFGLTRGVNANHIIRATLESIAYQTRDVLEAMQADSGIRLHALRVDGGAVANNFLMQFQSDILGTRVERPEVREVTALGAAYLAGLAVGFWQNLDELQEKAVIEREFRPGIETTERNYRYAGWKKAVKRAMAWEEHDE</sequence>
<keyword id="KW-0021">Allosteric enzyme</keyword>
<keyword id="KW-0067">ATP-binding</keyword>
<keyword id="KW-0319">Glycerol metabolism</keyword>
<keyword id="KW-0418">Kinase</keyword>
<keyword id="KW-0479">Metal-binding</keyword>
<keyword id="KW-0547">Nucleotide-binding</keyword>
<keyword id="KW-1185">Reference proteome</keyword>
<keyword id="KW-0808">Transferase</keyword>
<keyword id="KW-0862">Zinc</keyword>
<proteinExistence type="inferred from homology"/>
<evidence type="ECO:0000255" key="1">
    <source>
        <dbReference type="HAMAP-Rule" id="MF_00186"/>
    </source>
</evidence>
<dbReference type="EC" id="2.7.1.30" evidence="1"/>
<dbReference type="EMBL" id="CP000800">
    <property type="protein sequence ID" value="ABV20104.1"/>
    <property type="molecule type" value="Genomic_DNA"/>
</dbReference>
<dbReference type="RefSeq" id="WP_000136788.1">
    <property type="nucleotide sequence ID" value="NC_009801.1"/>
</dbReference>
<dbReference type="SMR" id="A7ZUE0"/>
<dbReference type="GeneID" id="75169366"/>
<dbReference type="KEGG" id="ecw:EcE24377A_4460"/>
<dbReference type="HOGENOM" id="CLU_009281_2_3_6"/>
<dbReference type="UniPathway" id="UPA00618">
    <property type="reaction ID" value="UER00672"/>
</dbReference>
<dbReference type="Proteomes" id="UP000001122">
    <property type="component" value="Chromosome"/>
</dbReference>
<dbReference type="GO" id="GO:0005829">
    <property type="term" value="C:cytosol"/>
    <property type="evidence" value="ECO:0007669"/>
    <property type="project" value="TreeGrafter"/>
</dbReference>
<dbReference type="GO" id="GO:0005524">
    <property type="term" value="F:ATP binding"/>
    <property type="evidence" value="ECO:0007669"/>
    <property type="project" value="UniProtKB-UniRule"/>
</dbReference>
<dbReference type="GO" id="GO:0004370">
    <property type="term" value="F:glycerol kinase activity"/>
    <property type="evidence" value="ECO:0000250"/>
    <property type="project" value="UniProtKB"/>
</dbReference>
<dbReference type="GO" id="GO:0046872">
    <property type="term" value="F:metal ion binding"/>
    <property type="evidence" value="ECO:0007669"/>
    <property type="project" value="UniProtKB-KW"/>
</dbReference>
<dbReference type="GO" id="GO:0019563">
    <property type="term" value="P:glycerol catabolic process"/>
    <property type="evidence" value="ECO:0007669"/>
    <property type="project" value="UniProtKB-UniRule"/>
</dbReference>
<dbReference type="GO" id="GO:0006071">
    <property type="term" value="P:glycerol metabolic process"/>
    <property type="evidence" value="ECO:0000250"/>
    <property type="project" value="UniProtKB"/>
</dbReference>
<dbReference type="GO" id="GO:0006072">
    <property type="term" value="P:glycerol-3-phosphate metabolic process"/>
    <property type="evidence" value="ECO:0007669"/>
    <property type="project" value="InterPro"/>
</dbReference>
<dbReference type="CDD" id="cd07786">
    <property type="entry name" value="FGGY_EcGK_like"/>
    <property type="match status" value="1"/>
</dbReference>
<dbReference type="FunFam" id="3.30.420.40:FF:000007">
    <property type="entry name" value="Glycerol kinase"/>
    <property type="match status" value="1"/>
</dbReference>
<dbReference type="FunFam" id="3.30.420.40:FF:000008">
    <property type="entry name" value="Glycerol kinase"/>
    <property type="match status" value="1"/>
</dbReference>
<dbReference type="Gene3D" id="3.30.420.40">
    <property type="match status" value="2"/>
</dbReference>
<dbReference type="HAMAP" id="MF_00186">
    <property type="entry name" value="Glycerol_kin"/>
    <property type="match status" value="1"/>
</dbReference>
<dbReference type="InterPro" id="IPR043129">
    <property type="entry name" value="ATPase_NBD"/>
</dbReference>
<dbReference type="InterPro" id="IPR000577">
    <property type="entry name" value="Carb_kinase_FGGY"/>
</dbReference>
<dbReference type="InterPro" id="IPR018483">
    <property type="entry name" value="Carb_kinase_FGGY_CS"/>
</dbReference>
<dbReference type="InterPro" id="IPR018485">
    <property type="entry name" value="FGGY_C"/>
</dbReference>
<dbReference type="InterPro" id="IPR018484">
    <property type="entry name" value="FGGY_N"/>
</dbReference>
<dbReference type="InterPro" id="IPR005999">
    <property type="entry name" value="Glycerol_kin"/>
</dbReference>
<dbReference type="NCBIfam" id="TIGR01311">
    <property type="entry name" value="glycerol_kin"/>
    <property type="match status" value="1"/>
</dbReference>
<dbReference type="NCBIfam" id="NF000756">
    <property type="entry name" value="PRK00047.1"/>
    <property type="match status" value="1"/>
</dbReference>
<dbReference type="PANTHER" id="PTHR10196:SF69">
    <property type="entry name" value="GLYCEROL KINASE"/>
    <property type="match status" value="1"/>
</dbReference>
<dbReference type="PANTHER" id="PTHR10196">
    <property type="entry name" value="SUGAR KINASE"/>
    <property type="match status" value="1"/>
</dbReference>
<dbReference type="Pfam" id="PF02782">
    <property type="entry name" value="FGGY_C"/>
    <property type="match status" value="1"/>
</dbReference>
<dbReference type="Pfam" id="PF00370">
    <property type="entry name" value="FGGY_N"/>
    <property type="match status" value="1"/>
</dbReference>
<dbReference type="PIRSF" id="PIRSF000538">
    <property type="entry name" value="GlpK"/>
    <property type="match status" value="1"/>
</dbReference>
<dbReference type="SUPFAM" id="SSF53067">
    <property type="entry name" value="Actin-like ATPase domain"/>
    <property type="match status" value="2"/>
</dbReference>
<dbReference type="PROSITE" id="PS00933">
    <property type="entry name" value="FGGY_KINASES_1"/>
    <property type="match status" value="1"/>
</dbReference>
<dbReference type="PROSITE" id="PS00445">
    <property type="entry name" value="FGGY_KINASES_2"/>
    <property type="match status" value="1"/>
</dbReference>
<protein>
    <recommendedName>
        <fullName evidence="1">Glycerol kinase</fullName>
        <ecNumber evidence="1">2.7.1.30</ecNumber>
    </recommendedName>
    <alternativeName>
        <fullName evidence="1">ATP:glycerol 3-phosphotransferase</fullName>
    </alternativeName>
    <alternativeName>
        <fullName evidence="1">Glycerokinase</fullName>
        <shortName evidence="1">GK</shortName>
    </alternativeName>
</protein>
<organism>
    <name type="scientific">Escherichia coli O139:H28 (strain E24377A / ETEC)</name>
    <dbReference type="NCBI Taxonomy" id="331111"/>
    <lineage>
        <taxon>Bacteria</taxon>
        <taxon>Pseudomonadati</taxon>
        <taxon>Pseudomonadota</taxon>
        <taxon>Gammaproteobacteria</taxon>
        <taxon>Enterobacterales</taxon>
        <taxon>Enterobacteriaceae</taxon>
        <taxon>Escherichia</taxon>
    </lineage>
</organism>
<reference key="1">
    <citation type="journal article" date="2008" name="J. Bacteriol.">
        <title>The pangenome structure of Escherichia coli: comparative genomic analysis of E. coli commensal and pathogenic isolates.</title>
        <authorList>
            <person name="Rasko D.A."/>
            <person name="Rosovitz M.J."/>
            <person name="Myers G.S.A."/>
            <person name="Mongodin E.F."/>
            <person name="Fricke W.F."/>
            <person name="Gajer P."/>
            <person name="Crabtree J."/>
            <person name="Sebaihia M."/>
            <person name="Thomson N.R."/>
            <person name="Chaudhuri R."/>
            <person name="Henderson I.R."/>
            <person name="Sperandio V."/>
            <person name="Ravel J."/>
        </authorList>
    </citation>
    <scope>NUCLEOTIDE SEQUENCE [LARGE SCALE GENOMIC DNA]</scope>
    <source>
        <strain>E24377A / ETEC</strain>
    </source>
</reference>
<name>GLPK_ECO24</name>
<feature type="chain" id="PRO_1000058444" description="Glycerol kinase">
    <location>
        <begin position="1"/>
        <end position="502"/>
    </location>
</feature>
<feature type="binding site" evidence="1">
    <location>
        <position position="14"/>
    </location>
    <ligand>
        <name>ADP</name>
        <dbReference type="ChEBI" id="CHEBI:456216"/>
    </ligand>
</feature>
<feature type="binding site" evidence="1">
    <location>
        <position position="14"/>
    </location>
    <ligand>
        <name>ATP</name>
        <dbReference type="ChEBI" id="CHEBI:30616"/>
    </ligand>
</feature>
<feature type="binding site" evidence="1">
    <location>
        <position position="14"/>
    </location>
    <ligand>
        <name>sn-glycerol 3-phosphate</name>
        <dbReference type="ChEBI" id="CHEBI:57597"/>
    </ligand>
</feature>
<feature type="binding site" evidence="1">
    <location>
        <position position="15"/>
    </location>
    <ligand>
        <name>ATP</name>
        <dbReference type="ChEBI" id="CHEBI:30616"/>
    </ligand>
</feature>
<feature type="binding site" evidence="1">
    <location>
        <position position="16"/>
    </location>
    <ligand>
        <name>ATP</name>
        <dbReference type="ChEBI" id="CHEBI:30616"/>
    </ligand>
</feature>
<feature type="binding site" evidence="1">
    <location>
        <position position="18"/>
    </location>
    <ligand>
        <name>ADP</name>
        <dbReference type="ChEBI" id="CHEBI:456216"/>
    </ligand>
</feature>
<feature type="binding site" evidence="1">
    <location>
        <position position="84"/>
    </location>
    <ligand>
        <name>glycerol</name>
        <dbReference type="ChEBI" id="CHEBI:17754"/>
    </ligand>
</feature>
<feature type="binding site" evidence="1">
    <location>
        <position position="84"/>
    </location>
    <ligand>
        <name>sn-glycerol 3-phosphate</name>
        <dbReference type="ChEBI" id="CHEBI:57597"/>
    </ligand>
</feature>
<feature type="binding site" evidence="1">
    <location>
        <position position="85"/>
    </location>
    <ligand>
        <name>glycerol</name>
        <dbReference type="ChEBI" id="CHEBI:17754"/>
    </ligand>
</feature>
<feature type="binding site" evidence="1">
    <location>
        <position position="85"/>
    </location>
    <ligand>
        <name>sn-glycerol 3-phosphate</name>
        <dbReference type="ChEBI" id="CHEBI:57597"/>
    </ligand>
</feature>
<feature type="binding site" evidence="1">
    <location>
        <position position="136"/>
    </location>
    <ligand>
        <name>glycerol</name>
        <dbReference type="ChEBI" id="CHEBI:17754"/>
    </ligand>
</feature>
<feature type="binding site" evidence="1">
    <location>
        <position position="136"/>
    </location>
    <ligand>
        <name>sn-glycerol 3-phosphate</name>
        <dbReference type="ChEBI" id="CHEBI:57597"/>
    </ligand>
</feature>
<feature type="binding site" evidence="1">
    <location>
        <position position="246"/>
    </location>
    <ligand>
        <name>glycerol</name>
        <dbReference type="ChEBI" id="CHEBI:17754"/>
    </ligand>
</feature>
<feature type="binding site" evidence="1">
    <location>
        <position position="246"/>
    </location>
    <ligand>
        <name>sn-glycerol 3-phosphate</name>
        <dbReference type="ChEBI" id="CHEBI:57597"/>
    </ligand>
</feature>
<feature type="binding site" evidence="1">
    <location>
        <position position="247"/>
    </location>
    <ligand>
        <name>glycerol</name>
        <dbReference type="ChEBI" id="CHEBI:17754"/>
    </ligand>
</feature>
<feature type="binding site" evidence="1">
    <location>
        <position position="268"/>
    </location>
    <ligand>
        <name>ADP</name>
        <dbReference type="ChEBI" id="CHEBI:456216"/>
    </ligand>
</feature>
<feature type="binding site" evidence="1">
    <location>
        <position position="268"/>
    </location>
    <ligand>
        <name>ATP</name>
        <dbReference type="ChEBI" id="CHEBI:30616"/>
    </ligand>
</feature>
<feature type="binding site" evidence="1">
    <location>
        <position position="311"/>
    </location>
    <ligand>
        <name>ADP</name>
        <dbReference type="ChEBI" id="CHEBI:456216"/>
    </ligand>
</feature>
<feature type="binding site" evidence="1">
    <location>
        <position position="311"/>
    </location>
    <ligand>
        <name>ATP</name>
        <dbReference type="ChEBI" id="CHEBI:30616"/>
    </ligand>
</feature>
<feature type="binding site" evidence="1">
    <location>
        <position position="315"/>
    </location>
    <ligand>
        <name>ATP</name>
        <dbReference type="ChEBI" id="CHEBI:30616"/>
    </ligand>
</feature>
<feature type="binding site" evidence="1">
    <location>
        <position position="412"/>
    </location>
    <ligand>
        <name>ADP</name>
        <dbReference type="ChEBI" id="CHEBI:456216"/>
    </ligand>
</feature>
<feature type="binding site" evidence="1">
    <location>
        <position position="412"/>
    </location>
    <ligand>
        <name>ATP</name>
        <dbReference type="ChEBI" id="CHEBI:30616"/>
    </ligand>
</feature>
<feature type="binding site" evidence="1">
    <location>
        <position position="416"/>
    </location>
    <ligand>
        <name>ADP</name>
        <dbReference type="ChEBI" id="CHEBI:456216"/>
    </ligand>
</feature>